<protein>
    <recommendedName>
        <fullName evidence="1">Lipoprotein signal peptidase</fullName>
        <ecNumber evidence="1">3.4.23.36</ecNumber>
    </recommendedName>
    <alternativeName>
        <fullName evidence="1">Prolipoprotein signal peptidase</fullName>
    </alternativeName>
    <alternativeName>
        <fullName evidence="1">Signal peptidase II</fullName>
        <shortName evidence="1">SPase II</shortName>
    </alternativeName>
</protein>
<organism>
    <name type="scientific">Rickettsia felis (strain ATCC VR-1525 / URRWXCal2)</name>
    <name type="common">Rickettsia azadi</name>
    <dbReference type="NCBI Taxonomy" id="315456"/>
    <lineage>
        <taxon>Bacteria</taxon>
        <taxon>Pseudomonadati</taxon>
        <taxon>Pseudomonadota</taxon>
        <taxon>Alphaproteobacteria</taxon>
        <taxon>Rickettsiales</taxon>
        <taxon>Rickettsiaceae</taxon>
        <taxon>Rickettsieae</taxon>
        <taxon>Rickettsia</taxon>
        <taxon>spotted fever group</taxon>
    </lineage>
</organism>
<accession>Q4ULU0</accession>
<gene>
    <name evidence="1" type="primary">lspA</name>
    <name type="ordered locus">RF_0632</name>
</gene>
<evidence type="ECO:0000255" key="1">
    <source>
        <dbReference type="HAMAP-Rule" id="MF_00161"/>
    </source>
</evidence>
<evidence type="ECO:0000305" key="2"/>
<comment type="function">
    <text evidence="1">This protein specifically catalyzes the removal of signal peptides from prolipoproteins.</text>
</comment>
<comment type="catalytic activity">
    <reaction evidence="1">
        <text>Release of signal peptides from bacterial membrane prolipoproteins. Hydrolyzes -Xaa-Yaa-Zaa-|-(S,diacylglyceryl)Cys-, in which Xaa is hydrophobic (preferably Leu), and Yaa (Ala or Ser) and Zaa (Gly or Ala) have small, neutral side chains.</text>
        <dbReference type="EC" id="3.4.23.36"/>
    </reaction>
</comment>
<comment type="pathway">
    <text evidence="1">Protein modification; lipoprotein biosynthesis (signal peptide cleavage).</text>
</comment>
<comment type="subcellular location">
    <subcellularLocation>
        <location evidence="1">Cell inner membrane</location>
        <topology evidence="1">Multi-pass membrane protein</topology>
    </subcellularLocation>
</comment>
<comment type="similarity">
    <text evidence="1">Belongs to the peptidase A8 family.</text>
</comment>
<comment type="sequence caution" evidence="2">
    <conflict type="erroneous initiation">
        <sequence resource="EMBL-CDS" id="AAY61483"/>
    </conflict>
</comment>
<dbReference type="EC" id="3.4.23.36" evidence="1"/>
<dbReference type="EMBL" id="CP000053">
    <property type="protein sequence ID" value="AAY61483.1"/>
    <property type="status" value="ALT_INIT"/>
    <property type="molecule type" value="Genomic_DNA"/>
</dbReference>
<dbReference type="SMR" id="Q4ULU0"/>
<dbReference type="STRING" id="315456.RF_0632"/>
<dbReference type="KEGG" id="rfe:RF_0632"/>
<dbReference type="eggNOG" id="COG0597">
    <property type="taxonomic scope" value="Bacteria"/>
</dbReference>
<dbReference type="HOGENOM" id="CLU_083252_4_3_5"/>
<dbReference type="OrthoDB" id="9810259at2"/>
<dbReference type="UniPathway" id="UPA00665"/>
<dbReference type="Proteomes" id="UP000008548">
    <property type="component" value="Chromosome"/>
</dbReference>
<dbReference type="GO" id="GO:0005886">
    <property type="term" value="C:plasma membrane"/>
    <property type="evidence" value="ECO:0007669"/>
    <property type="project" value="UniProtKB-SubCell"/>
</dbReference>
<dbReference type="GO" id="GO:0004190">
    <property type="term" value="F:aspartic-type endopeptidase activity"/>
    <property type="evidence" value="ECO:0007669"/>
    <property type="project" value="UniProtKB-UniRule"/>
</dbReference>
<dbReference type="GO" id="GO:0006508">
    <property type="term" value="P:proteolysis"/>
    <property type="evidence" value="ECO:0007669"/>
    <property type="project" value="UniProtKB-KW"/>
</dbReference>
<dbReference type="HAMAP" id="MF_00161">
    <property type="entry name" value="LspA"/>
    <property type="match status" value="1"/>
</dbReference>
<dbReference type="InterPro" id="IPR001872">
    <property type="entry name" value="Peptidase_A8"/>
</dbReference>
<dbReference type="NCBIfam" id="TIGR00077">
    <property type="entry name" value="lspA"/>
    <property type="match status" value="1"/>
</dbReference>
<dbReference type="PANTHER" id="PTHR33695">
    <property type="entry name" value="LIPOPROTEIN SIGNAL PEPTIDASE"/>
    <property type="match status" value="1"/>
</dbReference>
<dbReference type="PANTHER" id="PTHR33695:SF1">
    <property type="entry name" value="LIPOPROTEIN SIGNAL PEPTIDASE"/>
    <property type="match status" value="1"/>
</dbReference>
<dbReference type="Pfam" id="PF01252">
    <property type="entry name" value="Peptidase_A8"/>
    <property type="match status" value="1"/>
</dbReference>
<dbReference type="PRINTS" id="PR00781">
    <property type="entry name" value="LIPOSIGPTASE"/>
</dbReference>
<dbReference type="PROSITE" id="PS00855">
    <property type="entry name" value="SPASE_II"/>
    <property type="match status" value="1"/>
</dbReference>
<sequence>MFLLLKKLYITFARSSRIIITLVIIDQLSKWWFIDDLRWKPGLMLKVTSFLNMVYTWNYGISFGLMREYYQYSNAIFLITNTLIVCYLYYLMIRSKTIGSFAGYSFVIGGAVGNLIDRFFRGAVFDFIHFHYQNYSFPVFNLADCFITIGVIILIEDYYSTKKVIEEKAKGNYDNAQIEAMAEKIRNAGHNGDDIVN</sequence>
<keyword id="KW-0064">Aspartyl protease</keyword>
<keyword id="KW-0997">Cell inner membrane</keyword>
<keyword id="KW-1003">Cell membrane</keyword>
<keyword id="KW-0378">Hydrolase</keyword>
<keyword id="KW-0472">Membrane</keyword>
<keyword id="KW-0645">Protease</keyword>
<keyword id="KW-0812">Transmembrane</keyword>
<keyword id="KW-1133">Transmembrane helix</keyword>
<proteinExistence type="inferred from homology"/>
<reference key="1">
    <citation type="journal article" date="2005" name="PLoS Biol.">
        <title>The genome sequence of Rickettsia felis identifies the first putative conjugative plasmid in an obligate intracellular parasite.</title>
        <authorList>
            <person name="Ogata H."/>
            <person name="Renesto P."/>
            <person name="Audic S."/>
            <person name="Robert C."/>
            <person name="Blanc G."/>
            <person name="Fournier P.-E."/>
            <person name="Parinello H."/>
            <person name="Claverie J.-M."/>
            <person name="Raoult D."/>
        </authorList>
    </citation>
    <scope>NUCLEOTIDE SEQUENCE [LARGE SCALE GENOMIC DNA]</scope>
    <source>
        <strain>ATCC VR-1525 / URRWXCal2</strain>
    </source>
</reference>
<feature type="chain" id="PRO_0000278078" description="Lipoprotein signal peptidase">
    <location>
        <begin position="1"/>
        <end position="197"/>
    </location>
</feature>
<feature type="transmembrane region" description="Helical" evidence="1">
    <location>
        <begin position="73"/>
        <end position="93"/>
    </location>
</feature>
<feature type="transmembrane region" description="Helical" evidence="1">
    <location>
        <begin position="97"/>
        <end position="117"/>
    </location>
</feature>
<feature type="transmembrane region" description="Helical" evidence="1">
    <location>
        <begin position="135"/>
        <end position="155"/>
    </location>
</feature>
<feature type="active site" evidence="1">
    <location>
        <position position="126"/>
    </location>
</feature>
<feature type="active site" evidence="1">
    <location>
        <position position="144"/>
    </location>
</feature>
<name>LSPA_RICFE</name>